<reference key="1">
    <citation type="journal article" date="2000" name="Nature">
        <title>The genome sequence of the food-borne pathogen Campylobacter jejuni reveals hypervariable sequences.</title>
        <authorList>
            <person name="Parkhill J."/>
            <person name="Wren B.W."/>
            <person name="Mungall K.L."/>
            <person name="Ketley J.M."/>
            <person name="Churcher C.M."/>
            <person name="Basham D."/>
            <person name="Chillingworth T."/>
            <person name="Davies R.M."/>
            <person name="Feltwell T."/>
            <person name="Holroyd S."/>
            <person name="Jagels K."/>
            <person name="Karlyshev A.V."/>
            <person name="Moule S."/>
            <person name="Pallen M.J."/>
            <person name="Penn C.W."/>
            <person name="Quail M.A."/>
            <person name="Rajandream M.A."/>
            <person name="Rutherford K.M."/>
            <person name="van Vliet A.H.M."/>
            <person name="Whitehead S."/>
            <person name="Barrell B.G."/>
        </authorList>
    </citation>
    <scope>NUCLEOTIDE SEQUENCE [LARGE SCALE GENOMIC DNA]</scope>
    <source>
        <strain>ATCC 700819 / NCTC 11168</strain>
    </source>
</reference>
<protein>
    <recommendedName>
        <fullName evidence="1">Membrane protein insertase YidC</fullName>
    </recommendedName>
    <alternativeName>
        <fullName evidence="1">Foldase YidC</fullName>
    </alternativeName>
    <alternativeName>
        <fullName evidence="1">Membrane integrase YidC</fullName>
    </alternativeName>
    <alternativeName>
        <fullName evidence="1">Membrane protein YidC</fullName>
    </alternativeName>
</protein>
<sequence>MNNSNNIFQQKRILLAVVISFLFFVIYDYFFIPKQPLKIEQNITQKNQQNTSINNTPNIQNATTNTPSAALVSQDSVISKVQSKHFEAQIDSFGRISAFYLKDRKYQNEKGEFINLVSKENSPYPLEMRFSDPSINSEAFKIPYVANASNLFVDENGSQVLKLTQNLSGLKIEKDITFYPKGNYEIEVKLSKNANYFISPGYRPNIAVDSYTVHGALVMDNKETIETYKDGDVEKDESANNVVMTSAFDRYYATFFYNFDKPLNVAISKDANQNPIVFAYSDNEFKAGGYIGSKEHVILRSIDPRLEAVVEYGWFTFIAKPMFEFLNFLHQYIGNWGWAIVVMTLIVRIILFPLTYKSMISMNKLKDLAPKMKDIRERYKGDPQKMNMHMMELYKKHGANPMSGCLPILLQIPIFFAIYRVLLNAIELKAAPWAFWIHDLSVMDPYFILPILMGATMFLQQLITPMTIQDPMQAKIMKFLPVIFTFFFITFPAGLTLYWFVNNLCSLVQQWVINKIFAKEHHKKTSGA</sequence>
<accession>Q9PNX7</accession>
<accession>Q0P9U1</accession>
<feature type="chain" id="PRO_0000124700" description="Membrane protein insertase YidC">
    <location>
        <begin position="1"/>
        <end position="528"/>
    </location>
</feature>
<feature type="transmembrane region" description="Helical" evidence="1">
    <location>
        <begin position="13"/>
        <end position="33"/>
    </location>
</feature>
<feature type="transmembrane region" description="Helical" evidence="1">
    <location>
        <begin position="336"/>
        <end position="356"/>
    </location>
</feature>
<feature type="transmembrane region" description="Helical" evidence="1">
    <location>
        <begin position="406"/>
        <end position="426"/>
    </location>
</feature>
<feature type="transmembrane region" description="Helical" evidence="1">
    <location>
        <begin position="446"/>
        <end position="466"/>
    </location>
</feature>
<feature type="transmembrane region" description="Helical" evidence="1">
    <location>
        <begin position="481"/>
        <end position="501"/>
    </location>
</feature>
<evidence type="ECO:0000255" key="1">
    <source>
        <dbReference type="HAMAP-Rule" id="MF_01810"/>
    </source>
</evidence>
<name>YIDC_CAMJE</name>
<keyword id="KW-0997">Cell inner membrane</keyword>
<keyword id="KW-1003">Cell membrane</keyword>
<keyword id="KW-0143">Chaperone</keyword>
<keyword id="KW-0472">Membrane</keyword>
<keyword id="KW-0653">Protein transport</keyword>
<keyword id="KW-1185">Reference proteome</keyword>
<keyword id="KW-0812">Transmembrane</keyword>
<keyword id="KW-1133">Transmembrane helix</keyword>
<keyword id="KW-0813">Transport</keyword>
<gene>
    <name evidence="1" type="primary">yidC</name>
    <name type="ordered locus">Cj0958c</name>
</gene>
<proteinExistence type="inferred from homology"/>
<dbReference type="EMBL" id="AL111168">
    <property type="protein sequence ID" value="CAL35078.1"/>
    <property type="molecule type" value="Genomic_DNA"/>
</dbReference>
<dbReference type="PIR" id="E81370">
    <property type="entry name" value="E81370"/>
</dbReference>
<dbReference type="RefSeq" id="WP_002853384.1">
    <property type="nucleotide sequence ID" value="NZ_SZUC01000001.1"/>
</dbReference>
<dbReference type="RefSeq" id="YP_002344356.1">
    <property type="nucleotide sequence ID" value="NC_002163.1"/>
</dbReference>
<dbReference type="SMR" id="Q9PNX7"/>
<dbReference type="STRING" id="192222.Cj0958c"/>
<dbReference type="PaxDb" id="192222-Cj0958c"/>
<dbReference type="EnsemblBacteria" id="CAL35078">
    <property type="protein sequence ID" value="CAL35078"/>
    <property type="gene ID" value="Cj0958c"/>
</dbReference>
<dbReference type="GeneID" id="904358"/>
<dbReference type="KEGG" id="cje:Cj0958c"/>
<dbReference type="PATRIC" id="fig|192222.6.peg.942"/>
<dbReference type="eggNOG" id="COG0706">
    <property type="taxonomic scope" value="Bacteria"/>
</dbReference>
<dbReference type="HOGENOM" id="CLU_016535_3_1_7"/>
<dbReference type="OrthoDB" id="9780552at2"/>
<dbReference type="Proteomes" id="UP000000799">
    <property type="component" value="Chromosome"/>
</dbReference>
<dbReference type="GO" id="GO:0005886">
    <property type="term" value="C:plasma membrane"/>
    <property type="evidence" value="ECO:0007669"/>
    <property type="project" value="UniProtKB-SubCell"/>
</dbReference>
<dbReference type="GO" id="GO:0032977">
    <property type="term" value="F:membrane insertase activity"/>
    <property type="evidence" value="ECO:0007669"/>
    <property type="project" value="InterPro"/>
</dbReference>
<dbReference type="GO" id="GO:0051205">
    <property type="term" value="P:protein insertion into membrane"/>
    <property type="evidence" value="ECO:0007669"/>
    <property type="project" value="TreeGrafter"/>
</dbReference>
<dbReference type="GO" id="GO:0015031">
    <property type="term" value="P:protein transport"/>
    <property type="evidence" value="ECO:0007669"/>
    <property type="project" value="UniProtKB-KW"/>
</dbReference>
<dbReference type="CDD" id="cd20070">
    <property type="entry name" value="5TM_YidC_Alb3"/>
    <property type="match status" value="1"/>
</dbReference>
<dbReference type="CDD" id="cd19960">
    <property type="entry name" value="YidC_peri"/>
    <property type="match status" value="1"/>
</dbReference>
<dbReference type="Gene3D" id="2.70.98.90">
    <property type="match status" value="1"/>
</dbReference>
<dbReference type="HAMAP" id="MF_01810">
    <property type="entry name" value="YidC_type1"/>
    <property type="match status" value="1"/>
</dbReference>
<dbReference type="InterPro" id="IPR019998">
    <property type="entry name" value="Membr_insert_YidC"/>
</dbReference>
<dbReference type="InterPro" id="IPR028053">
    <property type="entry name" value="Membr_insert_YidC_N"/>
</dbReference>
<dbReference type="InterPro" id="IPR001708">
    <property type="entry name" value="YidC/ALB3/OXA1/COX18"/>
</dbReference>
<dbReference type="InterPro" id="IPR028055">
    <property type="entry name" value="YidC/Oxa/ALB_C"/>
</dbReference>
<dbReference type="InterPro" id="IPR047196">
    <property type="entry name" value="YidC_ALB_C"/>
</dbReference>
<dbReference type="InterPro" id="IPR038221">
    <property type="entry name" value="YidC_periplasmic_sf"/>
</dbReference>
<dbReference type="NCBIfam" id="NF002357">
    <property type="entry name" value="PRK01318.2-4"/>
    <property type="match status" value="1"/>
</dbReference>
<dbReference type="NCBIfam" id="TIGR03593">
    <property type="entry name" value="yidC_nterm"/>
    <property type="match status" value="1"/>
</dbReference>
<dbReference type="NCBIfam" id="TIGR03592">
    <property type="entry name" value="yidC_oxa1_cterm"/>
    <property type="match status" value="1"/>
</dbReference>
<dbReference type="PANTHER" id="PTHR12428:SF65">
    <property type="entry name" value="CYTOCHROME C OXIDASE ASSEMBLY PROTEIN COX18, MITOCHONDRIAL"/>
    <property type="match status" value="1"/>
</dbReference>
<dbReference type="PANTHER" id="PTHR12428">
    <property type="entry name" value="OXA1"/>
    <property type="match status" value="1"/>
</dbReference>
<dbReference type="Pfam" id="PF02096">
    <property type="entry name" value="60KD_IMP"/>
    <property type="match status" value="1"/>
</dbReference>
<dbReference type="Pfam" id="PF14849">
    <property type="entry name" value="YidC_periplas"/>
    <property type="match status" value="1"/>
</dbReference>
<dbReference type="PRINTS" id="PR00701">
    <property type="entry name" value="60KDINNERMP"/>
</dbReference>
<dbReference type="PRINTS" id="PR01900">
    <property type="entry name" value="YIDCPROTEIN"/>
</dbReference>
<comment type="function">
    <text evidence="1">Required for the insertion and/or proper folding and/or complex formation of integral membrane proteins into the membrane. Involved in integration of membrane proteins that insert both dependently and independently of the Sec translocase complex, as well as at least some lipoproteins. Aids folding of multispanning membrane proteins.</text>
</comment>
<comment type="subunit">
    <text evidence="1">Interacts with the Sec translocase complex via SecD. Specifically interacts with transmembrane segments of nascent integral membrane proteins during membrane integration.</text>
</comment>
<comment type="subcellular location">
    <subcellularLocation>
        <location evidence="1">Cell inner membrane</location>
        <topology evidence="1">Multi-pass membrane protein</topology>
    </subcellularLocation>
</comment>
<comment type="similarity">
    <text evidence="1">Belongs to the OXA1/ALB3/YidC family. Type 1 subfamily.</text>
</comment>
<organism>
    <name type="scientific">Campylobacter jejuni subsp. jejuni serotype O:2 (strain ATCC 700819 / NCTC 11168)</name>
    <dbReference type="NCBI Taxonomy" id="192222"/>
    <lineage>
        <taxon>Bacteria</taxon>
        <taxon>Pseudomonadati</taxon>
        <taxon>Campylobacterota</taxon>
        <taxon>Epsilonproteobacteria</taxon>
        <taxon>Campylobacterales</taxon>
        <taxon>Campylobacteraceae</taxon>
        <taxon>Campylobacter</taxon>
    </lineage>
</organism>